<organism>
    <name type="scientific">Hyphantria cunea nuclear polyhedrosis virus</name>
    <name type="common">HcNPV</name>
    <dbReference type="NCBI Taxonomy" id="28288"/>
    <lineage>
        <taxon>Viruses</taxon>
        <taxon>Viruses incertae sedis</taxon>
        <taxon>Naldaviricetes</taxon>
        <taxon>Lefavirales</taxon>
        <taxon>Baculoviridae</taxon>
        <taxon>Alphabaculovirus</taxon>
        <taxon>Alphabaculovirus hycuneae</taxon>
    </lineage>
</organism>
<evidence type="ECO:0000305" key="1"/>
<sequence length="245" mass="28691">MPDFSYRPTIGRTYVYDNKSNKNLGSVIKNAKRKKHLLEHEAEEKFLDPLDHYMVAEDPFLGPGKNQKLTLFKEIRNVKPDTMKLIANWSGKEFLRETWTRFVEDSFPIVNDQEVMEVFLVINLRPTRPNRCYKFLAQHALRWDDNYVPHEVIRIVEPSYVGMNNEYRISLAKRGGGCPIMNIHSEYTNSFEQFVNRVIWENFYKPIVYIGTDSGEEEEILIEVSLVFKVKEFAPDAPLFTGPAY</sequence>
<protein>
    <recommendedName>
        <fullName>Polyhedrin</fullName>
    </recommendedName>
    <alternativeName>
        <fullName>Major occlusion protein</fullName>
    </alternativeName>
</protein>
<gene>
    <name type="primary">PH</name>
    <name type="synonym">P29</name>
    <name type="synonym">POLH</name>
</gene>
<comment type="function">
    <text>Major component of the virus occlusion bodies, which are large proteinaceous structures (polyhedra), that protect the virus from the outside environment for extended periods until they are ingested by insect larvae.</text>
</comment>
<comment type="similarity">
    <text evidence="1">Belongs to the polyhedrin family.</text>
</comment>
<reference key="1">
    <citation type="submission" date="1993-03" db="EMBL/GenBank/DDBJ databases">
        <title>Nucleotide sequence of Hyphantria cunea nuclear polyhedrosis virus polyhedrin gene.</title>
        <authorList>
            <person name="Isayama S."/>
            <person name="Yasuhisa K."/>
            <person name="Yasui K."/>
        </authorList>
    </citation>
    <scope>NUCLEOTIDE SEQUENCE [MRNA]</scope>
</reference>
<feature type="chain" id="PRO_0000217249" description="Polyhedrin">
    <location>
        <begin position="1"/>
        <end position="245"/>
    </location>
</feature>
<keyword id="KW-0842">Viral occlusion body</keyword>
<dbReference type="EMBL" id="D14573">
    <property type="protein sequence ID" value="BAA03427.1"/>
    <property type="molecule type" value="mRNA"/>
</dbReference>
<dbReference type="SMR" id="P32373"/>
<dbReference type="GO" id="GO:0039679">
    <property type="term" value="C:viral occlusion body"/>
    <property type="evidence" value="ECO:0007669"/>
    <property type="project" value="UniProtKB-KW"/>
</dbReference>
<dbReference type="GO" id="GO:0005198">
    <property type="term" value="F:structural molecule activity"/>
    <property type="evidence" value="ECO:0007669"/>
    <property type="project" value="InterPro"/>
</dbReference>
<dbReference type="InterPro" id="IPR001746">
    <property type="entry name" value="Polyhedrin"/>
</dbReference>
<dbReference type="Pfam" id="PF00738">
    <property type="entry name" value="Polyhedrin"/>
    <property type="match status" value="1"/>
</dbReference>
<organismHost>
    <name type="scientific">Lepidoptera</name>
    <name type="common">butterflies and moths</name>
    <dbReference type="NCBI Taxonomy" id="7088"/>
</organismHost>
<name>PYHD_NPVHC</name>
<proteinExistence type="evidence at transcript level"/>
<accession>P32373</accession>